<sequence>MKVLLANPRGFCAGVDRAIEIVKRTIDMLGTPIYVRHEVVHNRFVVDDLKQRGAIFVEELHQVPDGATVIFSAHGVSQAVRRQAAQRGLKVFDATCPLVTKVHLDVARHCRTGRDMILIGHAGHPEVEGTMGQWDQERGTGRIYLVENIDDVAALHVAQPHHLAYTTQTTLSVDDTRNIIDALRQRFPTIQGPKNNDICYATQNRQDAVRELARECDLVLVVGSPNSSNSNRLSELAQREGVASYLIDSAAEIDPAWVIDKHHIGVTAGASAPQVLVDGVLARLYELGATSVSEHSGKPESMVFALPKALRLQLVD</sequence>
<accession>B0U3Q7</accession>
<keyword id="KW-0004">4Fe-4S</keyword>
<keyword id="KW-0408">Iron</keyword>
<keyword id="KW-0411">Iron-sulfur</keyword>
<keyword id="KW-0414">Isoprene biosynthesis</keyword>
<keyword id="KW-0479">Metal-binding</keyword>
<keyword id="KW-0560">Oxidoreductase</keyword>
<proteinExistence type="inferred from homology"/>
<name>ISPH_XYLFM</name>
<organism>
    <name type="scientific">Xylella fastidiosa (strain M12)</name>
    <dbReference type="NCBI Taxonomy" id="405440"/>
    <lineage>
        <taxon>Bacteria</taxon>
        <taxon>Pseudomonadati</taxon>
        <taxon>Pseudomonadota</taxon>
        <taxon>Gammaproteobacteria</taxon>
        <taxon>Lysobacterales</taxon>
        <taxon>Lysobacteraceae</taxon>
        <taxon>Xylella</taxon>
    </lineage>
</organism>
<protein>
    <recommendedName>
        <fullName evidence="1">4-hydroxy-3-methylbut-2-enyl diphosphate reductase</fullName>
        <shortName evidence="1">HMBPP reductase</shortName>
        <ecNumber evidence="1">1.17.7.4</ecNumber>
    </recommendedName>
</protein>
<dbReference type="EC" id="1.17.7.4" evidence="1"/>
<dbReference type="EMBL" id="CP000941">
    <property type="protein sequence ID" value="ACA12486.1"/>
    <property type="molecule type" value="Genomic_DNA"/>
</dbReference>
<dbReference type="RefSeq" id="WP_012337991.1">
    <property type="nucleotide sequence ID" value="NC_010513.1"/>
</dbReference>
<dbReference type="SMR" id="B0U3Q7"/>
<dbReference type="KEGG" id="xfm:Xfasm12_1576"/>
<dbReference type="HOGENOM" id="CLU_027486_1_0_6"/>
<dbReference type="UniPathway" id="UPA00056">
    <property type="reaction ID" value="UER00097"/>
</dbReference>
<dbReference type="UniPathway" id="UPA00059">
    <property type="reaction ID" value="UER00105"/>
</dbReference>
<dbReference type="GO" id="GO:0051539">
    <property type="term" value="F:4 iron, 4 sulfur cluster binding"/>
    <property type="evidence" value="ECO:0007669"/>
    <property type="project" value="UniProtKB-UniRule"/>
</dbReference>
<dbReference type="GO" id="GO:0051745">
    <property type="term" value="F:4-hydroxy-3-methylbut-2-enyl diphosphate reductase activity"/>
    <property type="evidence" value="ECO:0007669"/>
    <property type="project" value="UniProtKB-UniRule"/>
</dbReference>
<dbReference type="GO" id="GO:0046872">
    <property type="term" value="F:metal ion binding"/>
    <property type="evidence" value="ECO:0007669"/>
    <property type="project" value="UniProtKB-KW"/>
</dbReference>
<dbReference type="GO" id="GO:0050992">
    <property type="term" value="P:dimethylallyl diphosphate biosynthetic process"/>
    <property type="evidence" value="ECO:0007669"/>
    <property type="project" value="UniProtKB-UniRule"/>
</dbReference>
<dbReference type="GO" id="GO:0019288">
    <property type="term" value="P:isopentenyl diphosphate biosynthetic process, methylerythritol 4-phosphate pathway"/>
    <property type="evidence" value="ECO:0007669"/>
    <property type="project" value="UniProtKB-UniRule"/>
</dbReference>
<dbReference type="GO" id="GO:0016114">
    <property type="term" value="P:terpenoid biosynthetic process"/>
    <property type="evidence" value="ECO:0007669"/>
    <property type="project" value="UniProtKB-UniRule"/>
</dbReference>
<dbReference type="CDD" id="cd13944">
    <property type="entry name" value="lytB_ispH"/>
    <property type="match status" value="1"/>
</dbReference>
<dbReference type="Gene3D" id="3.40.50.11270">
    <property type="match status" value="1"/>
</dbReference>
<dbReference type="Gene3D" id="3.40.1010.20">
    <property type="entry name" value="4-hydroxy-3-methylbut-2-enyl diphosphate reductase, catalytic domain"/>
    <property type="match status" value="2"/>
</dbReference>
<dbReference type="HAMAP" id="MF_00191">
    <property type="entry name" value="IspH"/>
    <property type="match status" value="1"/>
</dbReference>
<dbReference type="InterPro" id="IPR003451">
    <property type="entry name" value="LytB/IspH"/>
</dbReference>
<dbReference type="NCBIfam" id="TIGR00216">
    <property type="entry name" value="ispH_lytB"/>
    <property type="match status" value="1"/>
</dbReference>
<dbReference type="NCBIfam" id="NF002188">
    <property type="entry name" value="PRK01045.1-2"/>
    <property type="match status" value="1"/>
</dbReference>
<dbReference type="NCBIfam" id="NF002190">
    <property type="entry name" value="PRK01045.1-4"/>
    <property type="match status" value="1"/>
</dbReference>
<dbReference type="PANTHER" id="PTHR30426">
    <property type="entry name" value="4-HYDROXY-3-METHYLBUT-2-ENYL DIPHOSPHATE REDUCTASE"/>
    <property type="match status" value="1"/>
</dbReference>
<dbReference type="PANTHER" id="PTHR30426:SF0">
    <property type="entry name" value="4-HYDROXY-3-METHYLBUT-2-ENYL DIPHOSPHATE REDUCTASE"/>
    <property type="match status" value="1"/>
</dbReference>
<dbReference type="Pfam" id="PF02401">
    <property type="entry name" value="LYTB"/>
    <property type="match status" value="1"/>
</dbReference>
<feature type="chain" id="PRO_1000098992" description="4-hydroxy-3-methylbut-2-enyl diphosphate reductase">
    <location>
        <begin position="1"/>
        <end position="316"/>
    </location>
</feature>
<feature type="active site" description="Proton donor" evidence="1">
    <location>
        <position position="126"/>
    </location>
</feature>
<feature type="binding site" evidence="1">
    <location>
        <position position="12"/>
    </location>
    <ligand>
        <name>[4Fe-4S] cluster</name>
        <dbReference type="ChEBI" id="CHEBI:49883"/>
    </ligand>
</feature>
<feature type="binding site" evidence="1">
    <location>
        <position position="41"/>
    </location>
    <ligand>
        <name>(2E)-4-hydroxy-3-methylbut-2-enyl diphosphate</name>
        <dbReference type="ChEBI" id="CHEBI:128753"/>
    </ligand>
</feature>
<feature type="binding site" evidence="1">
    <location>
        <position position="41"/>
    </location>
    <ligand>
        <name>dimethylallyl diphosphate</name>
        <dbReference type="ChEBI" id="CHEBI:57623"/>
    </ligand>
</feature>
<feature type="binding site" evidence="1">
    <location>
        <position position="41"/>
    </location>
    <ligand>
        <name>isopentenyl diphosphate</name>
        <dbReference type="ChEBI" id="CHEBI:128769"/>
    </ligand>
</feature>
<feature type="binding site" evidence="1">
    <location>
        <position position="74"/>
    </location>
    <ligand>
        <name>(2E)-4-hydroxy-3-methylbut-2-enyl diphosphate</name>
        <dbReference type="ChEBI" id="CHEBI:128753"/>
    </ligand>
</feature>
<feature type="binding site" evidence="1">
    <location>
        <position position="74"/>
    </location>
    <ligand>
        <name>dimethylallyl diphosphate</name>
        <dbReference type="ChEBI" id="CHEBI:57623"/>
    </ligand>
</feature>
<feature type="binding site" evidence="1">
    <location>
        <position position="74"/>
    </location>
    <ligand>
        <name>isopentenyl diphosphate</name>
        <dbReference type="ChEBI" id="CHEBI:128769"/>
    </ligand>
</feature>
<feature type="binding site" evidence="1">
    <location>
        <position position="96"/>
    </location>
    <ligand>
        <name>[4Fe-4S] cluster</name>
        <dbReference type="ChEBI" id="CHEBI:49883"/>
    </ligand>
</feature>
<feature type="binding site" evidence="1">
    <location>
        <position position="124"/>
    </location>
    <ligand>
        <name>(2E)-4-hydroxy-3-methylbut-2-enyl diphosphate</name>
        <dbReference type="ChEBI" id="CHEBI:128753"/>
    </ligand>
</feature>
<feature type="binding site" evidence="1">
    <location>
        <position position="124"/>
    </location>
    <ligand>
        <name>dimethylallyl diphosphate</name>
        <dbReference type="ChEBI" id="CHEBI:57623"/>
    </ligand>
</feature>
<feature type="binding site" evidence="1">
    <location>
        <position position="124"/>
    </location>
    <ligand>
        <name>isopentenyl diphosphate</name>
        <dbReference type="ChEBI" id="CHEBI:128769"/>
    </ligand>
</feature>
<feature type="binding site" evidence="1">
    <location>
        <position position="169"/>
    </location>
    <ligand>
        <name>(2E)-4-hydroxy-3-methylbut-2-enyl diphosphate</name>
        <dbReference type="ChEBI" id="CHEBI:128753"/>
    </ligand>
</feature>
<feature type="binding site" evidence="1">
    <location>
        <position position="199"/>
    </location>
    <ligand>
        <name>[4Fe-4S] cluster</name>
        <dbReference type="ChEBI" id="CHEBI:49883"/>
    </ligand>
</feature>
<feature type="binding site" evidence="1">
    <location>
        <position position="227"/>
    </location>
    <ligand>
        <name>(2E)-4-hydroxy-3-methylbut-2-enyl diphosphate</name>
        <dbReference type="ChEBI" id="CHEBI:128753"/>
    </ligand>
</feature>
<feature type="binding site" evidence="1">
    <location>
        <position position="227"/>
    </location>
    <ligand>
        <name>dimethylallyl diphosphate</name>
        <dbReference type="ChEBI" id="CHEBI:57623"/>
    </ligand>
</feature>
<feature type="binding site" evidence="1">
    <location>
        <position position="227"/>
    </location>
    <ligand>
        <name>isopentenyl diphosphate</name>
        <dbReference type="ChEBI" id="CHEBI:128769"/>
    </ligand>
</feature>
<feature type="binding site" evidence="1">
    <location>
        <position position="228"/>
    </location>
    <ligand>
        <name>(2E)-4-hydroxy-3-methylbut-2-enyl diphosphate</name>
        <dbReference type="ChEBI" id="CHEBI:128753"/>
    </ligand>
</feature>
<feature type="binding site" evidence="1">
    <location>
        <position position="228"/>
    </location>
    <ligand>
        <name>dimethylallyl diphosphate</name>
        <dbReference type="ChEBI" id="CHEBI:57623"/>
    </ligand>
</feature>
<feature type="binding site" evidence="1">
    <location>
        <position position="228"/>
    </location>
    <ligand>
        <name>isopentenyl diphosphate</name>
        <dbReference type="ChEBI" id="CHEBI:128769"/>
    </ligand>
</feature>
<feature type="binding site" evidence="1">
    <location>
        <position position="229"/>
    </location>
    <ligand>
        <name>(2E)-4-hydroxy-3-methylbut-2-enyl diphosphate</name>
        <dbReference type="ChEBI" id="CHEBI:128753"/>
    </ligand>
</feature>
<feature type="binding site" evidence="1">
    <location>
        <position position="229"/>
    </location>
    <ligand>
        <name>dimethylallyl diphosphate</name>
        <dbReference type="ChEBI" id="CHEBI:57623"/>
    </ligand>
</feature>
<feature type="binding site" evidence="1">
    <location>
        <position position="229"/>
    </location>
    <ligand>
        <name>isopentenyl diphosphate</name>
        <dbReference type="ChEBI" id="CHEBI:128769"/>
    </ligand>
</feature>
<feature type="binding site" evidence="1">
    <location>
        <position position="271"/>
    </location>
    <ligand>
        <name>(2E)-4-hydroxy-3-methylbut-2-enyl diphosphate</name>
        <dbReference type="ChEBI" id="CHEBI:128753"/>
    </ligand>
</feature>
<feature type="binding site" evidence="1">
    <location>
        <position position="271"/>
    </location>
    <ligand>
        <name>dimethylallyl diphosphate</name>
        <dbReference type="ChEBI" id="CHEBI:57623"/>
    </ligand>
</feature>
<feature type="binding site" evidence="1">
    <location>
        <position position="271"/>
    </location>
    <ligand>
        <name>isopentenyl diphosphate</name>
        <dbReference type="ChEBI" id="CHEBI:128769"/>
    </ligand>
</feature>
<gene>
    <name evidence="1" type="primary">ispH</name>
    <name type="ordered locus">Xfasm12_1576</name>
</gene>
<reference key="1">
    <citation type="journal article" date="2010" name="J. Bacteriol.">
        <title>Whole genome sequences of two Xylella fastidiosa strains (M12 and M23) causing almond leaf scorch disease in California.</title>
        <authorList>
            <person name="Chen J."/>
            <person name="Xie G."/>
            <person name="Han S."/>
            <person name="Chertkov O."/>
            <person name="Sims D."/>
            <person name="Civerolo E.L."/>
        </authorList>
    </citation>
    <scope>NUCLEOTIDE SEQUENCE [LARGE SCALE GENOMIC DNA]</scope>
    <source>
        <strain>M12</strain>
    </source>
</reference>
<evidence type="ECO:0000255" key="1">
    <source>
        <dbReference type="HAMAP-Rule" id="MF_00191"/>
    </source>
</evidence>
<comment type="function">
    <text evidence="1">Catalyzes the conversion of 1-hydroxy-2-methyl-2-(E)-butenyl 4-diphosphate (HMBPP) into a mixture of isopentenyl diphosphate (IPP) and dimethylallyl diphosphate (DMAPP). Acts in the terminal step of the DOXP/MEP pathway for isoprenoid precursor biosynthesis.</text>
</comment>
<comment type="catalytic activity">
    <reaction evidence="1">
        <text>isopentenyl diphosphate + 2 oxidized [2Fe-2S]-[ferredoxin] + H2O = (2E)-4-hydroxy-3-methylbut-2-enyl diphosphate + 2 reduced [2Fe-2S]-[ferredoxin] + 2 H(+)</text>
        <dbReference type="Rhea" id="RHEA:24488"/>
        <dbReference type="Rhea" id="RHEA-COMP:10000"/>
        <dbReference type="Rhea" id="RHEA-COMP:10001"/>
        <dbReference type="ChEBI" id="CHEBI:15377"/>
        <dbReference type="ChEBI" id="CHEBI:15378"/>
        <dbReference type="ChEBI" id="CHEBI:33737"/>
        <dbReference type="ChEBI" id="CHEBI:33738"/>
        <dbReference type="ChEBI" id="CHEBI:128753"/>
        <dbReference type="ChEBI" id="CHEBI:128769"/>
        <dbReference type="EC" id="1.17.7.4"/>
    </reaction>
</comment>
<comment type="catalytic activity">
    <reaction evidence="1">
        <text>dimethylallyl diphosphate + 2 oxidized [2Fe-2S]-[ferredoxin] + H2O = (2E)-4-hydroxy-3-methylbut-2-enyl diphosphate + 2 reduced [2Fe-2S]-[ferredoxin] + 2 H(+)</text>
        <dbReference type="Rhea" id="RHEA:24825"/>
        <dbReference type="Rhea" id="RHEA-COMP:10000"/>
        <dbReference type="Rhea" id="RHEA-COMP:10001"/>
        <dbReference type="ChEBI" id="CHEBI:15377"/>
        <dbReference type="ChEBI" id="CHEBI:15378"/>
        <dbReference type="ChEBI" id="CHEBI:33737"/>
        <dbReference type="ChEBI" id="CHEBI:33738"/>
        <dbReference type="ChEBI" id="CHEBI:57623"/>
        <dbReference type="ChEBI" id="CHEBI:128753"/>
        <dbReference type="EC" id="1.17.7.4"/>
    </reaction>
</comment>
<comment type="cofactor">
    <cofactor evidence="1">
        <name>[4Fe-4S] cluster</name>
        <dbReference type="ChEBI" id="CHEBI:49883"/>
    </cofactor>
    <text evidence="1">Binds 1 [4Fe-4S] cluster per subunit.</text>
</comment>
<comment type="pathway">
    <text evidence="1">Isoprenoid biosynthesis; dimethylallyl diphosphate biosynthesis; dimethylallyl diphosphate from (2E)-4-hydroxy-3-methylbutenyl diphosphate: step 1/1.</text>
</comment>
<comment type="pathway">
    <text evidence="1">Isoprenoid biosynthesis; isopentenyl diphosphate biosynthesis via DXP pathway; isopentenyl diphosphate from 1-deoxy-D-xylulose 5-phosphate: step 6/6.</text>
</comment>
<comment type="similarity">
    <text evidence="1">Belongs to the IspH family.</text>
</comment>